<dbReference type="EMBL" id="CP000472">
    <property type="protein sequence ID" value="ACJ30374.1"/>
    <property type="molecule type" value="Genomic_DNA"/>
</dbReference>
<dbReference type="RefSeq" id="WP_020913719.1">
    <property type="nucleotide sequence ID" value="NC_011566.1"/>
</dbReference>
<dbReference type="SMR" id="B8CS84"/>
<dbReference type="STRING" id="225849.swp_3688"/>
<dbReference type="KEGG" id="swp:swp_3688"/>
<dbReference type="eggNOG" id="COG2924">
    <property type="taxonomic scope" value="Bacteria"/>
</dbReference>
<dbReference type="HOGENOM" id="CLU_170994_0_0_6"/>
<dbReference type="OrthoDB" id="9804318at2"/>
<dbReference type="Proteomes" id="UP000000753">
    <property type="component" value="Chromosome"/>
</dbReference>
<dbReference type="GO" id="GO:0005829">
    <property type="term" value="C:cytosol"/>
    <property type="evidence" value="ECO:0007669"/>
    <property type="project" value="TreeGrafter"/>
</dbReference>
<dbReference type="GO" id="GO:0005506">
    <property type="term" value="F:iron ion binding"/>
    <property type="evidence" value="ECO:0007669"/>
    <property type="project" value="UniProtKB-UniRule"/>
</dbReference>
<dbReference type="GO" id="GO:0034599">
    <property type="term" value="P:cellular response to oxidative stress"/>
    <property type="evidence" value="ECO:0007669"/>
    <property type="project" value="TreeGrafter"/>
</dbReference>
<dbReference type="FunFam" id="1.10.3880.10:FF:000001">
    <property type="entry name" value="Probable Fe(2+)-trafficking protein"/>
    <property type="match status" value="1"/>
</dbReference>
<dbReference type="Gene3D" id="1.10.3880.10">
    <property type="entry name" value="Fe(II) trafficking protein YggX"/>
    <property type="match status" value="1"/>
</dbReference>
<dbReference type="HAMAP" id="MF_00686">
    <property type="entry name" value="Fe_traffic_YggX"/>
    <property type="match status" value="1"/>
</dbReference>
<dbReference type="InterPro" id="IPR007457">
    <property type="entry name" value="Fe_traffick_prot_YggX"/>
</dbReference>
<dbReference type="InterPro" id="IPR036766">
    <property type="entry name" value="Fe_traffick_prot_YggX_sf"/>
</dbReference>
<dbReference type="NCBIfam" id="NF003817">
    <property type="entry name" value="PRK05408.1"/>
    <property type="match status" value="1"/>
</dbReference>
<dbReference type="PANTHER" id="PTHR36965">
    <property type="entry name" value="FE(2+)-TRAFFICKING PROTEIN-RELATED"/>
    <property type="match status" value="1"/>
</dbReference>
<dbReference type="PANTHER" id="PTHR36965:SF1">
    <property type="entry name" value="FE(2+)-TRAFFICKING PROTEIN-RELATED"/>
    <property type="match status" value="1"/>
</dbReference>
<dbReference type="Pfam" id="PF04362">
    <property type="entry name" value="Iron_traffic"/>
    <property type="match status" value="1"/>
</dbReference>
<dbReference type="PIRSF" id="PIRSF029827">
    <property type="entry name" value="Fe_traffic_YggX"/>
    <property type="match status" value="1"/>
</dbReference>
<dbReference type="SUPFAM" id="SSF111148">
    <property type="entry name" value="YggX-like"/>
    <property type="match status" value="1"/>
</dbReference>
<keyword id="KW-0408">Iron</keyword>
<protein>
    <recommendedName>
        <fullName evidence="1">Probable Fe(2+)-trafficking protein</fullName>
    </recommendedName>
</protein>
<comment type="function">
    <text evidence="1">Could be a mediator in iron transactions between iron acquisition and iron-requiring processes, such as synthesis and/or repair of Fe-S clusters in biosynthetic enzymes.</text>
</comment>
<comment type="similarity">
    <text evidence="1">Belongs to the Fe(2+)-trafficking protein family.</text>
</comment>
<feature type="chain" id="PRO_1000131865" description="Probable Fe(2+)-trafficking protein">
    <location>
        <begin position="1"/>
        <end position="92"/>
    </location>
</feature>
<proteinExistence type="inferred from homology"/>
<accession>B8CS84</accession>
<gene>
    <name type="ordered locus">swp_3688</name>
</gene>
<sequence>MARTVNCVYLKKEAEGLGFQLYPGDLGKRIFDNVSKEAWALWQSKQTMLINENKLNMMNVDDRKFLEEQMINFLFEGKDVEIEGYVPQKDDE</sequence>
<evidence type="ECO:0000255" key="1">
    <source>
        <dbReference type="HAMAP-Rule" id="MF_00686"/>
    </source>
</evidence>
<reference key="1">
    <citation type="journal article" date="2008" name="PLoS ONE">
        <title>Environmental adaptation: genomic analysis of the piezotolerant and psychrotolerant deep-sea iron reducing bacterium Shewanella piezotolerans WP3.</title>
        <authorList>
            <person name="Wang F."/>
            <person name="Wang J."/>
            <person name="Jian H."/>
            <person name="Zhang B."/>
            <person name="Li S."/>
            <person name="Wang F."/>
            <person name="Zeng X."/>
            <person name="Gao L."/>
            <person name="Bartlett D.H."/>
            <person name="Yu J."/>
            <person name="Hu S."/>
            <person name="Xiao X."/>
        </authorList>
    </citation>
    <scope>NUCLEOTIDE SEQUENCE [LARGE SCALE GENOMIC DNA]</scope>
    <source>
        <strain>WP3 / JCM 13877</strain>
    </source>
</reference>
<name>FETP_SHEPW</name>
<organism>
    <name type="scientific">Shewanella piezotolerans (strain WP3 / JCM 13877)</name>
    <dbReference type="NCBI Taxonomy" id="225849"/>
    <lineage>
        <taxon>Bacteria</taxon>
        <taxon>Pseudomonadati</taxon>
        <taxon>Pseudomonadota</taxon>
        <taxon>Gammaproteobacteria</taxon>
        <taxon>Alteromonadales</taxon>
        <taxon>Shewanellaceae</taxon>
        <taxon>Shewanella</taxon>
    </lineage>
</organism>